<protein>
    <recommendedName>
        <fullName evidence="1">Universal stress protein B</fullName>
    </recommendedName>
</protein>
<sequence>MISTVALFWALCVVCVVNMARYYSSLRALLVVLRGCDPLLYQYVDGGGFFTSHGQPSKQIRLVGYIFAQRYLDHHDPEFIRRCERLRGQFILTSALCGLVVVSLVALMLWY</sequence>
<organism>
    <name type="scientific">Yersinia pseudotuberculosis serotype I (strain IP32953)</name>
    <dbReference type="NCBI Taxonomy" id="273123"/>
    <lineage>
        <taxon>Bacteria</taxon>
        <taxon>Pseudomonadati</taxon>
        <taxon>Pseudomonadota</taxon>
        <taxon>Gammaproteobacteria</taxon>
        <taxon>Enterobacterales</taxon>
        <taxon>Yersiniaceae</taxon>
        <taxon>Yersinia</taxon>
    </lineage>
</organism>
<name>USPB_YERPS</name>
<keyword id="KW-0997">Cell inner membrane</keyword>
<keyword id="KW-1003">Cell membrane</keyword>
<keyword id="KW-0472">Membrane</keyword>
<keyword id="KW-0812">Transmembrane</keyword>
<keyword id="KW-1133">Transmembrane helix</keyword>
<gene>
    <name evidence="1" type="primary">uspB</name>
    <name type="ordered locus">YPTB3811</name>
</gene>
<feature type="chain" id="PRO_0000212055" description="Universal stress protein B">
    <location>
        <begin position="1"/>
        <end position="111"/>
    </location>
</feature>
<feature type="transmembrane region" description="Helical" evidence="1">
    <location>
        <begin position="1"/>
        <end position="21"/>
    </location>
</feature>
<feature type="transmembrane region" description="Helical" evidence="1">
    <location>
        <begin position="90"/>
        <end position="110"/>
    </location>
</feature>
<reference key="1">
    <citation type="journal article" date="2004" name="Proc. Natl. Acad. Sci. U.S.A.">
        <title>Insights into the evolution of Yersinia pestis through whole-genome comparison with Yersinia pseudotuberculosis.</title>
        <authorList>
            <person name="Chain P.S.G."/>
            <person name="Carniel E."/>
            <person name="Larimer F.W."/>
            <person name="Lamerdin J."/>
            <person name="Stoutland P.O."/>
            <person name="Regala W.M."/>
            <person name="Georgescu A.M."/>
            <person name="Vergez L.M."/>
            <person name="Land M.L."/>
            <person name="Motin V.L."/>
            <person name="Brubaker R.R."/>
            <person name="Fowler J."/>
            <person name="Hinnebusch J."/>
            <person name="Marceau M."/>
            <person name="Medigue C."/>
            <person name="Simonet M."/>
            <person name="Chenal-Francisque V."/>
            <person name="Souza B."/>
            <person name="Dacheux D."/>
            <person name="Elliott J.M."/>
            <person name="Derbise A."/>
            <person name="Hauser L.J."/>
            <person name="Garcia E."/>
        </authorList>
    </citation>
    <scope>NUCLEOTIDE SEQUENCE [LARGE SCALE GENOMIC DNA]</scope>
    <source>
        <strain>IP32953</strain>
    </source>
</reference>
<comment type="subcellular location">
    <subcellularLocation>
        <location evidence="1">Cell inner membrane</location>
        <topology evidence="1">Multi-pass membrane protein</topology>
    </subcellularLocation>
</comment>
<comment type="similarity">
    <text evidence="1">Belongs to the universal stress protein B family.</text>
</comment>
<evidence type="ECO:0000255" key="1">
    <source>
        <dbReference type="HAMAP-Rule" id="MF_01088"/>
    </source>
</evidence>
<dbReference type="EMBL" id="BX936398">
    <property type="protein sequence ID" value="CAH23049.1"/>
    <property type="molecule type" value="Genomic_DNA"/>
</dbReference>
<dbReference type="RefSeq" id="WP_002209527.1">
    <property type="nucleotide sequence ID" value="NZ_CP009712.1"/>
</dbReference>
<dbReference type="GeneID" id="96663308"/>
<dbReference type="KEGG" id="ypo:BZ17_2774"/>
<dbReference type="KEGG" id="yps:YPTB3811"/>
<dbReference type="PATRIC" id="fig|273123.14.peg.2908"/>
<dbReference type="Proteomes" id="UP000001011">
    <property type="component" value="Chromosome"/>
</dbReference>
<dbReference type="GO" id="GO:0005886">
    <property type="term" value="C:plasma membrane"/>
    <property type="evidence" value="ECO:0007669"/>
    <property type="project" value="UniProtKB-SubCell"/>
</dbReference>
<dbReference type="HAMAP" id="MF_01088">
    <property type="entry name" value="UspB"/>
    <property type="match status" value="1"/>
</dbReference>
<dbReference type="InterPro" id="IPR019598">
    <property type="entry name" value="Universal_stress_protein_B"/>
</dbReference>
<dbReference type="NCBIfam" id="NF003435">
    <property type="entry name" value="PRK04960.1"/>
    <property type="match status" value="1"/>
</dbReference>
<dbReference type="Pfam" id="PF10625">
    <property type="entry name" value="UspB"/>
    <property type="match status" value="1"/>
</dbReference>
<accession>Q664F8</accession>
<proteinExistence type="inferred from homology"/>